<dbReference type="EMBL" id="AE006468">
    <property type="protein sequence ID" value="AAL19168.1"/>
    <property type="status" value="ALT_INIT"/>
    <property type="molecule type" value="Genomic_DNA"/>
</dbReference>
<dbReference type="RefSeq" id="WP_000504423.1">
    <property type="nucleotide sequence ID" value="NC_003197.2"/>
</dbReference>
<dbReference type="SMR" id="Q7CR66"/>
<dbReference type="STRING" id="99287.STM0204"/>
<dbReference type="PaxDb" id="99287-STM0204"/>
<dbReference type="KEGG" id="stm:STM0204"/>
<dbReference type="PATRIC" id="fig|99287.12.peg.217"/>
<dbReference type="HOGENOM" id="CLU_069054_5_3_6"/>
<dbReference type="OMA" id="LYIYGMQ"/>
<dbReference type="PhylomeDB" id="Q7CR66"/>
<dbReference type="Proteomes" id="UP000001014">
    <property type="component" value="Chromosome"/>
</dbReference>
<dbReference type="GO" id="GO:0005829">
    <property type="term" value="C:cytosol"/>
    <property type="evidence" value="ECO:0000318"/>
    <property type="project" value="GO_Central"/>
</dbReference>
<dbReference type="GO" id="GO:0051537">
    <property type="term" value="F:2 iron, 2 sulfur cluster binding"/>
    <property type="evidence" value="ECO:0000318"/>
    <property type="project" value="GO_Central"/>
</dbReference>
<dbReference type="GO" id="GO:0051539">
    <property type="term" value="F:4 iron, 4 sulfur cluster binding"/>
    <property type="evidence" value="ECO:0000318"/>
    <property type="project" value="GO_Central"/>
</dbReference>
<dbReference type="GO" id="GO:0005506">
    <property type="term" value="F:iron ion binding"/>
    <property type="evidence" value="ECO:0000318"/>
    <property type="project" value="GO_Central"/>
</dbReference>
<dbReference type="GO" id="GO:0016226">
    <property type="term" value="P:iron-sulfur cluster assembly"/>
    <property type="evidence" value="ECO:0000318"/>
    <property type="project" value="GO_Central"/>
</dbReference>
<dbReference type="FunFam" id="2.60.300.12:FF:000002">
    <property type="entry name" value="Iron-sulfur cluster insertion protein ErpA"/>
    <property type="match status" value="1"/>
</dbReference>
<dbReference type="Gene3D" id="2.60.300.12">
    <property type="entry name" value="HesB-like domain"/>
    <property type="match status" value="1"/>
</dbReference>
<dbReference type="HAMAP" id="MF_01380">
    <property type="entry name" value="Fe_S_insert_ErpA"/>
    <property type="match status" value="1"/>
</dbReference>
<dbReference type="InterPro" id="IPR000361">
    <property type="entry name" value="FeS_biogenesis"/>
</dbReference>
<dbReference type="InterPro" id="IPR016092">
    <property type="entry name" value="FeS_cluster_insertion"/>
</dbReference>
<dbReference type="InterPro" id="IPR017870">
    <property type="entry name" value="FeS_cluster_insertion_CS"/>
</dbReference>
<dbReference type="InterPro" id="IPR023063">
    <property type="entry name" value="FeS_cluster_insertion_RrpA"/>
</dbReference>
<dbReference type="InterPro" id="IPR035903">
    <property type="entry name" value="HesB-like_dom_sf"/>
</dbReference>
<dbReference type="NCBIfam" id="TIGR00049">
    <property type="entry name" value="iron-sulfur cluster assembly accessory protein"/>
    <property type="match status" value="1"/>
</dbReference>
<dbReference type="NCBIfam" id="NF010147">
    <property type="entry name" value="PRK13623.1"/>
    <property type="match status" value="1"/>
</dbReference>
<dbReference type="PANTHER" id="PTHR43011">
    <property type="entry name" value="IRON-SULFUR CLUSTER ASSEMBLY 2 HOMOLOG, MITOCHONDRIAL"/>
    <property type="match status" value="1"/>
</dbReference>
<dbReference type="PANTHER" id="PTHR43011:SF1">
    <property type="entry name" value="IRON-SULFUR CLUSTER ASSEMBLY 2 HOMOLOG, MITOCHONDRIAL"/>
    <property type="match status" value="1"/>
</dbReference>
<dbReference type="Pfam" id="PF01521">
    <property type="entry name" value="Fe-S_biosyn"/>
    <property type="match status" value="1"/>
</dbReference>
<dbReference type="SUPFAM" id="SSF89360">
    <property type="entry name" value="HesB-like domain"/>
    <property type="match status" value="1"/>
</dbReference>
<dbReference type="PROSITE" id="PS01152">
    <property type="entry name" value="HESB"/>
    <property type="match status" value="1"/>
</dbReference>
<organism>
    <name type="scientific">Salmonella typhimurium (strain LT2 / SGSC1412 / ATCC 700720)</name>
    <dbReference type="NCBI Taxonomy" id="99287"/>
    <lineage>
        <taxon>Bacteria</taxon>
        <taxon>Pseudomonadati</taxon>
        <taxon>Pseudomonadota</taxon>
        <taxon>Gammaproteobacteria</taxon>
        <taxon>Enterobacterales</taxon>
        <taxon>Enterobacteriaceae</taxon>
        <taxon>Salmonella</taxon>
    </lineage>
</organism>
<reference key="1">
    <citation type="journal article" date="2001" name="Nature">
        <title>Complete genome sequence of Salmonella enterica serovar Typhimurium LT2.</title>
        <authorList>
            <person name="McClelland M."/>
            <person name="Sanderson K.E."/>
            <person name="Spieth J."/>
            <person name="Clifton S.W."/>
            <person name="Latreille P."/>
            <person name="Courtney L."/>
            <person name="Porwollik S."/>
            <person name="Ali J."/>
            <person name="Dante M."/>
            <person name="Du F."/>
            <person name="Hou S."/>
            <person name="Layman D."/>
            <person name="Leonard S."/>
            <person name="Nguyen C."/>
            <person name="Scott K."/>
            <person name="Holmes A."/>
            <person name="Grewal N."/>
            <person name="Mulvaney E."/>
            <person name="Ryan E."/>
            <person name="Sun H."/>
            <person name="Florea L."/>
            <person name="Miller W."/>
            <person name="Stoneking T."/>
            <person name="Nhan M."/>
            <person name="Waterston R."/>
            <person name="Wilson R.K."/>
        </authorList>
    </citation>
    <scope>NUCLEOTIDE SEQUENCE [LARGE SCALE GENOMIC DNA]</scope>
    <source>
        <strain>LT2 / SGSC1412 / ATCC 700720</strain>
    </source>
</reference>
<comment type="function">
    <text evidence="1">Required for insertion of 4Fe-4S clusters for at least IspG.</text>
</comment>
<comment type="cofactor">
    <cofactor evidence="1">
        <name>iron-sulfur cluster</name>
        <dbReference type="ChEBI" id="CHEBI:30408"/>
    </cofactor>
    <text evidence="1">Binds 1 iron-sulfur cluster per subunit.</text>
</comment>
<comment type="subunit">
    <text evidence="1">Homodimer.</text>
</comment>
<comment type="similarity">
    <text evidence="1">Belongs to the HesB/IscA family.</text>
</comment>
<comment type="sequence caution" evidence="2">
    <conflict type="erroneous initiation">
        <sequence resource="EMBL-CDS" id="AAL19168"/>
    </conflict>
</comment>
<name>ERPA_SALTY</name>
<evidence type="ECO:0000255" key="1">
    <source>
        <dbReference type="HAMAP-Rule" id="MF_01380"/>
    </source>
</evidence>
<evidence type="ECO:0000305" key="2"/>
<gene>
    <name evidence="1" type="primary">erpA</name>
    <name type="ordered locus">STM0204</name>
</gene>
<protein>
    <recommendedName>
        <fullName evidence="1">Iron-sulfur cluster insertion protein ErpA</fullName>
    </recommendedName>
</protein>
<accession>Q7CR66</accession>
<proteinExistence type="inferred from homology"/>
<keyword id="KW-0408">Iron</keyword>
<keyword id="KW-0411">Iron-sulfur</keyword>
<keyword id="KW-0479">Metal-binding</keyword>
<keyword id="KW-1185">Reference proteome</keyword>
<sequence>MSDDVALPLQFTDAAANKVKSLIADEDNPNLKLRVYITGGGCSGFQYGFTFDDQVNEGDMTIEKQGVGLVVDPMSLQYLVGGSVDYTEGLEGSRFIVTNPNAKSTCGCGSSFSI</sequence>
<feature type="chain" id="PRO_0000311546" description="Iron-sulfur cluster insertion protein ErpA">
    <location>
        <begin position="1"/>
        <end position="114"/>
    </location>
</feature>
<feature type="binding site" evidence="1">
    <location>
        <position position="42"/>
    </location>
    <ligand>
        <name>iron-sulfur cluster</name>
        <dbReference type="ChEBI" id="CHEBI:30408"/>
    </ligand>
</feature>
<feature type="binding site" evidence="1">
    <location>
        <position position="106"/>
    </location>
    <ligand>
        <name>iron-sulfur cluster</name>
        <dbReference type="ChEBI" id="CHEBI:30408"/>
    </ligand>
</feature>
<feature type="binding site" evidence="1">
    <location>
        <position position="108"/>
    </location>
    <ligand>
        <name>iron-sulfur cluster</name>
        <dbReference type="ChEBI" id="CHEBI:30408"/>
    </ligand>
</feature>